<dbReference type="EC" id="2.7.2.1" evidence="1"/>
<dbReference type="EMBL" id="CP000962">
    <property type="protein sequence ID" value="ACA56130.1"/>
    <property type="molecule type" value="Genomic_DNA"/>
</dbReference>
<dbReference type="RefSeq" id="WP_012344032.1">
    <property type="nucleotide sequence ID" value="NC_010520.1"/>
</dbReference>
<dbReference type="SMR" id="B1KWP9"/>
<dbReference type="KEGG" id="cbl:CLK_1836"/>
<dbReference type="HOGENOM" id="CLU_020352_0_1_9"/>
<dbReference type="UniPathway" id="UPA00340">
    <property type="reaction ID" value="UER00458"/>
</dbReference>
<dbReference type="GO" id="GO:0005737">
    <property type="term" value="C:cytoplasm"/>
    <property type="evidence" value="ECO:0007669"/>
    <property type="project" value="UniProtKB-SubCell"/>
</dbReference>
<dbReference type="GO" id="GO:0008776">
    <property type="term" value="F:acetate kinase activity"/>
    <property type="evidence" value="ECO:0007669"/>
    <property type="project" value="UniProtKB-UniRule"/>
</dbReference>
<dbReference type="GO" id="GO:0005524">
    <property type="term" value="F:ATP binding"/>
    <property type="evidence" value="ECO:0007669"/>
    <property type="project" value="UniProtKB-KW"/>
</dbReference>
<dbReference type="GO" id="GO:0000287">
    <property type="term" value="F:magnesium ion binding"/>
    <property type="evidence" value="ECO:0007669"/>
    <property type="project" value="UniProtKB-UniRule"/>
</dbReference>
<dbReference type="GO" id="GO:0006083">
    <property type="term" value="P:acetate metabolic process"/>
    <property type="evidence" value="ECO:0007669"/>
    <property type="project" value="TreeGrafter"/>
</dbReference>
<dbReference type="GO" id="GO:0006085">
    <property type="term" value="P:acetyl-CoA biosynthetic process"/>
    <property type="evidence" value="ECO:0007669"/>
    <property type="project" value="UniProtKB-UniRule"/>
</dbReference>
<dbReference type="CDD" id="cd24010">
    <property type="entry name" value="ASKHA_NBD_AcK_PK"/>
    <property type="match status" value="1"/>
</dbReference>
<dbReference type="Gene3D" id="3.30.420.40">
    <property type="match status" value="2"/>
</dbReference>
<dbReference type="HAMAP" id="MF_00020">
    <property type="entry name" value="Acetate_kinase"/>
    <property type="match status" value="1"/>
</dbReference>
<dbReference type="InterPro" id="IPR004372">
    <property type="entry name" value="Ac/propionate_kinase"/>
</dbReference>
<dbReference type="InterPro" id="IPR000890">
    <property type="entry name" value="Aliphatic_acid_kin_short-chain"/>
</dbReference>
<dbReference type="InterPro" id="IPR023865">
    <property type="entry name" value="Aliphatic_acid_kinase_CS"/>
</dbReference>
<dbReference type="InterPro" id="IPR043129">
    <property type="entry name" value="ATPase_NBD"/>
</dbReference>
<dbReference type="NCBIfam" id="TIGR00016">
    <property type="entry name" value="ackA"/>
    <property type="match status" value="1"/>
</dbReference>
<dbReference type="PANTHER" id="PTHR21060">
    <property type="entry name" value="ACETATE KINASE"/>
    <property type="match status" value="1"/>
</dbReference>
<dbReference type="PANTHER" id="PTHR21060:SF15">
    <property type="entry name" value="ACETATE KINASE-RELATED"/>
    <property type="match status" value="1"/>
</dbReference>
<dbReference type="Pfam" id="PF00871">
    <property type="entry name" value="Acetate_kinase"/>
    <property type="match status" value="1"/>
</dbReference>
<dbReference type="PIRSF" id="PIRSF000722">
    <property type="entry name" value="Acetate_prop_kin"/>
    <property type="match status" value="1"/>
</dbReference>
<dbReference type="PRINTS" id="PR00471">
    <property type="entry name" value="ACETATEKNASE"/>
</dbReference>
<dbReference type="SUPFAM" id="SSF53067">
    <property type="entry name" value="Actin-like ATPase domain"/>
    <property type="match status" value="2"/>
</dbReference>
<dbReference type="PROSITE" id="PS01075">
    <property type="entry name" value="ACETATE_KINASE_1"/>
    <property type="match status" value="1"/>
</dbReference>
<dbReference type="PROSITE" id="PS01076">
    <property type="entry name" value="ACETATE_KINASE_2"/>
    <property type="match status" value="1"/>
</dbReference>
<feature type="chain" id="PRO_1000089969" description="Acetate kinase">
    <location>
        <begin position="1"/>
        <end position="397"/>
    </location>
</feature>
<feature type="active site" description="Proton donor/acceptor" evidence="1">
    <location>
        <position position="147"/>
    </location>
</feature>
<feature type="binding site" evidence="1">
    <location>
        <position position="7"/>
    </location>
    <ligand>
        <name>Mg(2+)</name>
        <dbReference type="ChEBI" id="CHEBI:18420"/>
    </ligand>
</feature>
<feature type="binding site" evidence="1">
    <location>
        <position position="14"/>
    </location>
    <ligand>
        <name>ATP</name>
        <dbReference type="ChEBI" id="CHEBI:30616"/>
    </ligand>
</feature>
<feature type="binding site" evidence="1">
    <location>
        <position position="90"/>
    </location>
    <ligand>
        <name>substrate</name>
    </ligand>
</feature>
<feature type="binding site" evidence="1">
    <location>
        <begin position="207"/>
        <end position="211"/>
    </location>
    <ligand>
        <name>ATP</name>
        <dbReference type="ChEBI" id="CHEBI:30616"/>
    </ligand>
</feature>
<feature type="binding site" evidence="1">
    <location>
        <begin position="282"/>
        <end position="284"/>
    </location>
    <ligand>
        <name>ATP</name>
        <dbReference type="ChEBI" id="CHEBI:30616"/>
    </ligand>
</feature>
<feature type="binding site" evidence="1">
    <location>
        <begin position="330"/>
        <end position="334"/>
    </location>
    <ligand>
        <name>ATP</name>
        <dbReference type="ChEBI" id="CHEBI:30616"/>
    </ligand>
</feature>
<feature type="binding site" evidence="1">
    <location>
        <position position="383"/>
    </location>
    <ligand>
        <name>Mg(2+)</name>
        <dbReference type="ChEBI" id="CHEBI:18420"/>
    </ligand>
</feature>
<feature type="site" description="Transition state stabilizer" evidence="1">
    <location>
        <position position="179"/>
    </location>
</feature>
<feature type="site" description="Transition state stabilizer" evidence="1">
    <location>
        <position position="240"/>
    </location>
</feature>
<organism>
    <name type="scientific">Clostridium botulinum (strain Loch Maree / Type A3)</name>
    <dbReference type="NCBI Taxonomy" id="498214"/>
    <lineage>
        <taxon>Bacteria</taxon>
        <taxon>Bacillati</taxon>
        <taxon>Bacillota</taxon>
        <taxon>Clostridia</taxon>
        <taxon>Eubacteriales</taxon>
        <taxon>Clostridiaceae</taxon>
        <taxon>Clostridium</taxon>
    </lineage>
</organism>
<keyword id="KW-0067">ATP-binding</keyword>
<keyword id="KW-0963">Cytoplasm</keyword>
<keyword id="KW-0418">Kinase</keyword>
<keyword id="KW-0460">Magnesium</keyword>
<keyword id="KW-0479">Metal-binding</keyword>
<keyword id="KW-0547">Nucleotide-binding</keyword>
<keyword id="KW-0808">Transferase</keyword>
<proteinExistence type="inferred from homology"/>
<name>ACKA_CLOBM</name>
<reference key="1">
    <citation type="journal article" date="2007" name="PLoS ONE">
        <title>Analysis of the neurotoxin complex genes in Clostridium botulinum A1-A4 and B1 strains: BoNT/A3, /Ba4 and /B1 clusters are located within plasmids.</title>
        <authorList>
            <person name="Smith T.J."/>
            <person name="Hill K.K."/>
            <person name="Foley B.T."/>
            <person name="Detter J.C."/>
            <person name="Munk A.C."/>
            <person name="Bruce D.C."/>
            <person name="Doggett N.A."/>
            <person name="Smith L.A."/>
            <person name="Marks J.D."/>
            <person name="Xie G."/>
            <person name="Brettin T.S."/>
        </authorList>
    </citation>
    <scope>NUCLEOTIDE SEQUENCE [LARGE SCALE GENOMIC DNA]</scope>
    <source>
        <strain>Loch Maree / Type A3</strain>
    </source>
</reference>
<comment type="function">
    <text evidence="1">Catalyzes the formation of acetyl phosphate from acetate and ATP. Can also catalyze the reverse reaction.</text>
</comment>
<comment type="catalytic activity">
    <reaction evidence="1">
        <text>acetate + ATP = acetyl phosphate + ADP</text>
        <dbReference type="Rhea" id="RHEA:11352"/>
        <dbReference type="ChEBI" id="CHEBI:22191"/>
        <dbReference type="ChEBI" id="CHEBI:30089"/>
        <dbReference type="ChEBI" id="CHEBI:30616"/>
        <dbReference type="ChEBI" id="CHEBI:456216"/>
        <dbReference type="EC" id="2.7.2.1"/>
    </reaction>
</comment>
<comment type="cofactor">
    <cofactor evidence="1">
        <name>Mg(2+)</name>
        <dbReference type="ChEBI" id="CHEBI:18420"/>
    </cofactor>
    <cofactor evidence="1">
        <name>Mn(2+)</name>
        <dbReference type="ChEBI" id="CHEBI:29035"/>
    </cofactor>
    <text evidence="1">Mg(2+). Can also accept Mn(2+).</text>
</comment>
<comment type="pathway">
    <text evidence="1">Metabolic intermediate biosynthesis; acetyl-CoA biosynthesis; acetyl-CoA from acetate: step 1/2.</text>
</comment>
<comment type="subunit">
    <text evidence="1">Homodimer.</text>
</comment>
<comment type="subcellular location">
    <subcellularLocation>
        <location evidence="1">Cytoplasm</location>
    </subcellularLocation>
</comment>
<comment type="similarity">
    <text evidence="1">Belongs to the acetokinase family.</text>
</comment>
<evidence type="ECO:0000255" key="1">
    <source>
        <dbReference type="HAMAP-Rule" id="MF_00020"/>
    </source>
</evidence>
<sequence length="397" mass="43358">MKILVVNCGSSSLKYQLIDMTSEEALAKGLVERIGIEGSILTQKVNGEKYIIEEPMKDHKKAIELVLKALVDKEHGVISDMSEIAAVGHRVVHGGEKYASSVLIDDEVMKALEDCVKLAPLHNPPNIIGINACRELMPKTPMVAVFDTAFHQTLPDYAYMYPLPYELYEQNGIRKYGFHGTSHRYVSSVASDMMGKDLKDLKVITCHLGNGASLCAVKEGKSVETSMGFTPLAGLAMGTRCGDIDPAILLFMERELKMSPDEVDAVINKKSGVLGISGVSSDFRDIEGAAKEGNKRAKLALDVYHYTVRQTIGAYTAVLNGVDAIVFTAGLGENSAASREEILNGLEYLGIKIDAEKNKQRGKQIEISTEDSKVKVFVIPTDEELMIARDTKEITAK</sequence>
<gene>
    <name evidence="1" type="primary">ackA</name>
    <name type="ordered locus">CLK_1836</name>
</gene>
<accession>B1KWP9</accession>
<protein>
    <recommendedName>
        <fullName evidence="1">Acetate kinase</fullName>
        <ecNumber evidence="1">2.7.2.1</ecNumber>
    </recommendedName>
    <alternativeName>
        <fullName evidence="1">Acetokinase</fullName>
    </alternativeName>
</protein>